<accession>Q9BPJ4</accession>
<feature type="signal peptide" evidence="3">
    <location>
        <begin position="1"/>
        <end position="22"/>
    </location>
</feature>
<feature type="propeptide" id="PRO_0000404908" evidence="1">
    <location>
        <begin position="23"/>
        <end position="74"/>
    </location>
</feature>
<feature type="peptide" id="PRO_0000404909" description="Conotoxin TxMMSK-06">
    <location>
        <begin position="75"/>
        <end position="89"/>
    </location>
</feature>
<feature type="region of interest" description="Disordered" evidence="4">
    <location>
        <begin position="24"/>
        <end position="43"/>
    </location>
</feature>
<feature type="compositionally biased region" description="Basic and acidic residues" evidence="4">
    <location>
        <begin position="25"/>
        <end position="43"/>
    </location>
</feature>
<feature type="modified residue" description="4-hydroxyproline" evidence="1">
    <location>
        <position position="87"/>
    </location>
</feature>
<feature type="modified residue" description="Cysteine amide" evidence="1">
    <location>
        <position position="89"/>
    </location>
</feature>
<feature type="disulfide bond" evidence="2">
    <location>
        <begin position="75"/>
        <end position="89"/>
    </location>
</feature>
<feature type="disulfide bond" evidence="2">
    <location>
        <begin position="76"/>
        <end position="85"/>
    </location>
</feature>
<feature type="disulfide bond" evidence="2">
    <location>
        <begin position="81"/>
        <end position="88"/>
    </location>
</feature>
<sequence length="90" mass="10031">MMSKLGVLLTICLLLFPHTAVPLDGDQHADQPAERLQDDISSEHHPMLNSIRRREQNQFMSFTSVKLRDSRGERCCGPTACMAGCRPCCG</sequence>
<proteinExistence type="evidence at transcript level"/>
<organism>
    <name type="scientific">Conus textile</name>
    <name type="common">Cloth-of-gold cone</name>
    <dbReference type="NCBI Taxonomy" id="6494"/>
    <lineage>
        <taxon>Eukaryota</taxon>
        <taxon>Metazoa</taxon>
        <taxon>Spiralia</taxon>
        <taxon>Lophotrochozoa</taxon>
        <taxon>Mollusca</taxon>
        <taxon>Gastropoda</taxon>
        <taxon>Caenogastropoda</taxon>
        <taxon>Neogastropoda</taxon>
        <taxon>Conoidea</taxon>
        <taxon>Conidae</taxon>
        <taxon>Conus</taxon>
        <taxon>Cylinder</taxon>
    </lineage>
</organism>
<dbReference type="EMBL" id="AF214929">
    <property type="protein sequence ID" value="AAG60357.1"/>
    <property type="molecule type" value="mRNA"/>
</dbReference>
<dbReference type="ConoServer" id="616">
    <property type="toxin name" value="TxMMSK-06 precursor"/>
</dbReference>
<dbReference type="GO" id="GO:0005576">
    <property type="term" value="C:extracellular region"/>
    <property type="evidence" value="ECO:0007669"/>
    <property type="project" value="UniProtKB-SubCell"/>
</dbReference>
<dbReference type="GO" id="GO:0008200">
    <property type="term" value="F:ion channel inhibitor activity"/>
    <property type="evidence" value="ECO:0007669"/>
    <property type="project" value="InterPro"/>
</dbReference>
<dbReference type="GO" id="GO:0090729">
    <property type="term" value="F:toxin activity"/>
    <property type="evidence" value="ECO:0007669"/>
    <property type="project" value="UniProtKB-KW"/>
</dbReference>
<dbReference type="InterPro" id="IPR004214">
    <property type="entry name" value="Conotoxin"/>
</dbReference>
<dbReference type="Pfam" id="PF02950">
    <property type="entry name" value="Conotoxin"/>
    <property type="match status" value="1"/>
</dbReference>
<comment type="subcellular location">
    <subcellularLocation>
        <location evidence="1">Secreted</location>
    </subcellularLocation>
</comment>
<comment type="tissue specificity">
    <text>Expressed by the venom duct.</text>
</comment>
<comment type="domain">
    <text>The cysteine framework is III (CC-C-C-CC). Classified in the M-2 branch, since 2 residues stand between the fourth and the fifth cysteine residues.</text>
</comment>
<comment type="similarity">
    <text evidence="5">Belongs to the conotoxin M superfamily.</text>
</comment>
<keyword id="KW-0027">Amidation</keyword>
<keyword id="KW-0165">Cleavage on pair of basic residues</keyword>
<keyword id="KW-1015">Disulfide bond</keyword>
<keyword id="KW-0379">Hydroxylation</keyword>
<keyword id="KW-0528">Neurotoxin</keyword>
<keyword id="KW-0964">Secreted</keyword>
<keyword id="KW-0732">Signal</keyword>
<keyword id="KW-0800">Toxin</keyword>
<name>M236_CONTE</name>
<reference key="1">
    <citation type="journal article" date="2001" name="Mol. Biol. Evol.">
        <title>Mechanisms for evolving hypervariability: the case of conopeptides.</title>
        <authorList>
            <person name="Conticello S.G."/>
            <person name="Gilad Y."/>
            <person name="Avidan N."/>
            <person name="Ben-Asher E."/>
            <person name="Levy Z."/>
            <person name="Fainzilber M."/>
        </authorList>
    </citation>
    <scope>NUCLEOTIDE SEQUENCE [MRNA]</scope>
    <source>
        <tissue>Venom duct</tissue>
    </source>
</reference>
<evidence type="ECO:0000250" key="1"/>
<evidence type="ECO:0000250" key="2">
    <source>
        <dbReference type="UniProtKB" id="P0CI24"/>
    </source>
</evidence>
<evidence type="ECO:0000255" key="3"/>
<evidence type="ECO:0000256" key="4">
    <source>
        <dbReference type="SAM" id="MobiDB-lite"/>
    </source>
</evidence>
<evidence type="ECO:0000305" key="5"/>
<protein>
    <recommendedName>
        <fullName>Conotoxin TxMMSK-06</fullName>
    </recommendedName>
</protein>